<gene>
    <name type="ordered locus">KPK_2871</name>
</gene>
<accession>B5XR74</accession>
<proteinExistence type="inferred from homology"/>
<feature type="signal peptide" evidence="1">
    <location>
        <begin position="1"/>
        <end position="28"/>
    </location>
</feature>
<feature type="chain" id="PRO_1000201004" description="UPF0482 protein KPK_2871">
    <location>
        <begin position="29"/>
        <end position="113"/>
    </location>
</feature>
<feature type="region of interest" description="Disordered" evidence="2">
    <location>
        <begin position="38"/>
        <end position="61"/>
    </location>
</feature>
<feature type="compositionally biased region" description="Polar residues" evidence="2">
    <location>
        <begin position="39"/>
        <end position="48"/>
    </location>
</feature>
<feature type="compositionally biased region" description="Basic and acidic residues" evidence="2">
    <location>
        <begin position="49"/>
        <end position="59"/>
    </location>
</feature>
<keyword id="KW-0732">Signal</keyword>
<evidence type="ECO:0000255" key="1">
    <source>
        <dbReference type="HAMAP-Rule" id="MF_01581"/>
    </source>
</evidence>
<evidence type="ECO:0000256" key="2">
    <source>
        <dbReference type="SAM" id="MobiDB-lite"/>
    </source>
</evidence>
<name>Y2871_KLEP3</name>
<dbReference type="EMBL" id="CP000964">
    <property type="protein sequence ID" value="ACI06696.1"/>
    <property type="molecule type" value="Genomic_DNA"/>
</dbReference>
<dbReference type="KEGG" id="kpe:KPK_2871"/>
<dbReference type="HOGENOM" id="CLU_167574_0_0_6"/>
<dbReference type="BioCyc" id="KPNE507522:GI0B-2859-MONOMER"/>
<dbReference type="Proteomes" id="UP000001734">
    <property type="component" value="Chromosome"/>
</dbReference>
<dbReference type="HAMAP" id="MF_01581">
    <property type="entry name" value="UPF0482"/>
    <property type="match status" value="1"/>
</dbReference>
<dbReference type="InterPro" id="IPR009700">
    <property type="entry name" value="DUF1283"/>
</dbReference>
<dbReference type="NCBIfam" id="NF010180">
    <property type="entry name" value="PRK13659.1"/>
    <property type="match status" value="1"/>
</dbReference>
<dbReference type="Pfam" id="PF06932">
    <property type="entry name" value="DUF1283"/>
    <property type="match status" value="1"/>
</dbReference>
<comment type="similarity">
    <text evidence="1">Belongs to the UPF0482 family.</text>
</comment>
<sequence>MNMTLNKRWCLTAILALSAVVYTSSSFAATDRLVIESGDSAQSRQQASMEKEQWNDTRSLRQKVNKRAEKEWDKTDVAFDAQDNCQKSANVNAYWEPNTLRCLDRRTGRAINP</sequence>
<protein>
    <recommendedName>
        <fullName evidence="1">UPF0482 protein KPK_2871</fullName>
    </recommendedName>
</protein>
<reference key="1">
    <citation type="journal article" date="2008" name="PLoS Genet.">
        <title>Complete genome sequence of the N2-fixing broad host range endophyte Klebsiella pneumoniae 342 and virulence predictions verified in mice.</title>
        <authorList>
            <person name="Fouts D.E."/>
            <person name="Tyler H.L."/>
            <person name="DeBoy R.T."/>
            <person name="Daugherty S."/>
            <person name="Ren Q."/>
            <person name="Badger J.H."/>
            <person name="Durkin A.S."/>
            <person name="Huot H."/>
            <person name="Shrivastava S."/>
            <person name="Kothari S."/>
            <person name="Dodson R.J."/>
            <person name="Mohamoud Y."/>
            <person name="Khouri H."/>
            <person name="Roesch L.F.W."/>
            <person name="Krogfelt K.A."/>
            <person name="Struve C."/>
            <person name="Triplett E.W."/>
            <person name="Methe B.A."/>
        </authorList>
    </citation>
    <scope>NUCLEOTIDE SEQUENCE [LARGE SCALE GENOMIC DNA]</scope>
    <source>
        <strain>342</strain>
    </source>
</reference>
<organism>
    <name type="scientific">Klebsiella pneumoniae (strain 342)</name>
    <dbReference type="NCBI Taxonomy" id="507522"/>
    <lineage>
        <taxon>Bacteria</taxon>
        <taxon>Pseudomonadati</taxon>
        <taxon>Pseudomonadota</taxon>
        <taxon>Gammaproteobacteria</taxon>
        <taxon>Enterobacterales</taxon>
        <taxon>Enterobacteriaceae</taxon>
        <taxon>Klebsiella/Raoultella group</taxon>
        <taxon>Klebsiella</taxon>
        <taxon>Klebsiella pneumoniae complex</taxon>
    </lineage>
</organism>